<name>DAPF_CAMJR</name>
<reference key="1">
    <citation type="journal article" date="2005" name="PLoS Biol.">
        <title>Major structural differences and novel potential virulence mechanisms from the genomes of multiple Campylobacter species.</title>
        <authorList>
            <person name="Fouts D.E."/>
            <person name="Mongodin E.F."/>
            <person name="Mandrell R.E."/>
            <person name="Miller W.G."/>
            <person name="Rasko D.A."/>
            <person name="Ravel J."/>
            <person name="Brinkac L.M."/>
            <person name="DeBoy R.T."/>
            <person name="Parker C.T."/>
            <person name="Daugherty S.C."/>
            <person name="Dodson R.J."/>
            <person name="Durkin A.S."/>
            <person name="Madupu R."/>
            <person name="Sullivan S.A."/>
            <person name="Shetty J.U."/>
            <person name="Ayodeji M.A."/>
            <person name="Shvartsbeyn A."/>
            <person name="Schatz M.C."/>
            <person name="Badger J.H."/>
            <person name="Fraser C.M."/>
            <person name="Nelson K.E."/>
        </authorList>
    </citation>
    <scope>NUCLEOTIDE SEQUENCE [LARGE SCALE GENOMIC DNA]</scope>
    <source>
        <strain>RM1221</strain>
    </source>
</reference>
<organism>
    <name type="scientific">Campylobacter jejuni (strain RM1221)</name>
    <dbReference type="NCBI Taxonomy" id="195099"/>
    <lineage>
        <taxon>Bacteria</taxon>
        <taxon>Pseudomonadati</taxon>
        <taxon>Campylobacterota</taxon>
        <taxon>Epsilonproteobacteria</taxon>
        <taxon>Campylobacterales</taxon>
        <taxon>Campylobacteraceae</taxon>
        <taxon>Campylobacter</taxon>
    </lineage>
</organism>
<accession>Q5HSQ5</accession>
<proteinExistence type="inferred from homology"/>
<sequence length="249" mass="28349">MKFYKYCASGNDFVITNADRKEDRSALAKELCNRYEGIGGDGFIVILPHEKYDFEWEFYNNDGSRAAMCGNGSRAAAHFAHHINKINPNMSFLTGAGIIKAKVNQDKVEVSLGKIKSVQNTFEELGKTWQLCDTGVPHLVHFCQNLDEFDTILCQKMRQKYNANVNFVKILDENHLKVRTYERGVEDETLACGTGMGACFYLAFLNKKVQNKVKITPKSGEEVGFTYKNEELFFEGKVKYCFEANYNFS</sequence>
<keyword id="KW-0028">Amino-acid biosynthesis</keyword>
<keyword id="KW-0963">Cytoplasm</keyword>
<keyword id="KW-0413">Isomerase</keyword>
<keyword id="KW-0457">Lysine biosynthesis</keyword>
<comment type="function">
    <text evidence="1">Catalyzes the stereoinversion of LL-2,6-diaminopimelate (L,L-DAP) to meso-diaminopimelate (meso-DAP), a precursor of L-lysine and an essential component of the bacterial peptidoglycan.</text>
</comment>
<comment type="catalytic activity">
    <reaction evidence="1">
        <text>(2S,6S)-2,6-diaminopimelate = meso-2,6-diaminopimelate</text>
        <dbReference type="Rhea" id="RHEA:15393"/>
        <dbReference type="ChEBI" id="CHEBI:57609"/>
        <dbReference type="ChEBI" id="CHEBI:57791"/>
        <dbReference type="EC" id="5.1.1.7"/>
    </reaction>
</comment>
<comment type="pathway">
    <text evidence="1">Amino-acid biosynthesis; L-lysine biosynthesis via DAP pathway; DL-2,6-diaminopimelate from LL-2,6-diaminopimelate: step 1/1.</text>
</comment>
<comment type="subunit">
    <text evidence="1">Homodimer.</text>
</comment>
<comment type="subcellular location">
    <subcellularLocation>
        <location evidence="1">Cytoplasm</location>
    </subcellularLocation>
</comment>
<comment type="similarity">
    <text evidence="1">Belongs to the diaminopimelate epimerase family.</text>
</comment>
<evidence type="ECO:0000255" key="1">
    <source>
        <dbReference type="HAMAP-Rule" id="MF_00197"/>
    </source>
</evidence>
<gene>
    <name evidence="1" type="primary">dapF</name>
    <name type="ordered locus">CJE1702</name>
</gene>
<dbReference type="EC" id="5.1.1.7" evidence="1"/>
<dbReference type="EMBL" id="CP000025">
    <property type="protein sequence ID" value="AAW36132.1"/>
    <property type="molecule type" value="Genomic_DNA"/>
</dbReference>
<dbReference type="RefSeq" id="WP_002867218.1">
    <property type="nucleotide sequence ID" value="NC_003912.7"/>
</dbReference>
<dbReference type="SMR" id="Q5HSQ5"/>
<dbReference type="KEGG" id="cjr:CJE1702"/>
<dbReference type="HOGENOM" id="CLU_053306_3_2_7"/>
<dbReference type="UniPathway" id="UPA00034">
    <property type="reaction ID" value="UER00025"/>
</dbReference>
<dbReference type="GO" id="GO:0005829">
    <property type="term" value="C:cytosol"/>
    <property type="evidence" value="ECO:0007669"/>
    <property type="project" value="TreeGrafter"/>
</dbReference>
<dbReference type="GO" id="GO:0008837">
    <property type="term" value="F:diaminopimelate epimerase activity"/>
    <property type="evidence" value="ECO:0007669"/>
    <property type="project" value="UniProtKB-UniRule"/>
</dbReference>
<dbReference type="GO" id="GO:0009089">
    <property type="term" value="P:lysine biosynthetic process via diaminopimelate"/>
    <property type="evidence" value="ECO:0007669"/>
    <property type="project" value="UniProtKB-UniRule"/>
</dbReference>
<dbReference type="Gene3D" id="3.10.310.10">
    <property type="entry name" value="Diaminopimelate Epimerase, Chain A, domain 1"/>
    <property type="match status" value="2"/>
</dbReference>
<dbReference type="HAMAP" id="MF_00197">
    <property type="entry name" value="DAP_epimerase"/>
    <property type="match status" value="1"/>
</dbReference>
<dbReference type="InterPro" id="IPR018510">
    <property type="entry name" value="DAP_epimerase_AS"/>
</dbReference>
<dbReference type="InterPro" id="IPR001653">
    <property type="entry name" value="DAP_epimerase_DapF"/>
</dbReference>
<dbReference type="NCBIfam" id="TIGR00652">
    <property type="entry name" value="DapF"/>
    <property type="match status" value="1"/>
</dbReference>
<dbReference type="PANTHER" id="PTHR31689:SF0">
    <property type="entry name" value="DIAMINOPIMELATE EPIMERASE"/>
    <property type="match status" value="1"/>
</dbReference>
<dbReference type="PANTHER" id="PTHR31689">
    <property type="entry name" value="DIAMINOPIMELATE EPIMERASE, CHLOROPLASTIC"/>
    <property type="match status" value="1"/>
</dbReference>
<dbReference type="Pfam" id="PF01678">
    <property type="entry name" value="DAP_epimerase"/>
    <property type="match status" value="2"/>
</dbReference>
<dbReference type="SUPFAM" id="SSF54506">
    <property type="entry name" value="Diaminopimelate epimerase-like"/>
    <property type="match status" value="2"/>
</dbReference>
<dbReference type="PROSITE" id="PS01326">
    <property type="entry name" value="DAP_EPIMERASE"/>
    <property type="match status" value="1"/>
</dbReference>
<feature type="chain" id="PRO_1000011866" description="Diaminopimelate epimerase">
    <location>
        <begin position="1"/>
        <end position="249"/>
    </location>
</feature>
<feature type="active site" description="Proton donor" evidence="1">
    <location>
        <position position="69"/>
    </location>
</feature>
<feature type="active site" description="Proton acceptor" evidence="1">
    <location>
        <position position="192"/>
    </location>
</feature>
<feature type="binding site" evidence="1">
    <location>
        <position position="11"/>
    </location>
    <ligand>
        <name>substrate</name>
    </ligand>
</feature>
<feature type="binding site" evidence="1">
    <location>
        <position position="60"/>
    </location>
    <ligand>
        <name>substrate</name>
    </ligand>
</feature>
<feature type="binding site" evidence="1">
    <location>
        <begin position="70"/>
        <end position="71"/>
    </location>
    <ligand>
        <name>substrate</name>
    </ligand>
</feature>
<feature type="binding site" evidence="1">
    <location>
        <position position="164"/>
    </location>
    <ligand>
        <name>substrate</name>
    </ligand>
</feature>
<feature type="binding site" evidence="1">
    <location>
        <begin position="182"/>
        <end position="183"/>
    </location>
    <ligand>
        <name>substrate</name>
    </ligand>
</feature>
<feature type="binding site" evidence="1">
    <location>
        <begin position="193"/>
        <end position="194"/>
    </location>
    <ligand>
        <name>substrate</name>
    </ligand>
</feature>
<feature type="site" description="Could be important to modulate the pK values of the two catalytic cysteine residues" evidence="1">
    <location>
        <position position="138"/>
    </location>
</feature>
<feature type="site" description="Could be important to modulate the pK values of the two catalytic cysteine residues" evidence="1">
    <location>
        <position position="182"/>
    </location>
</feature>
<protein>
    <recommendedName>
        <fullName evidence="1">Diaminopimelate epimerase</fullName>
        <shortName evidence="1">DAP epimerase</shortName>
        <ecNumber evidence="1">5.1.1.7</ecNumber>
    </recommendedName>
    <alternativeName>
        <fullName evidence="1">PLP-independent amino acid racemase</fullName>
    </alternativeName>
</protein>